<evidence type="ECO:0000255" key="1"/>
<evidence type="ECO:0000303" key="2">
    <source>
    </source>
</evidence>
<evidence type="ECO:0000303" key="3">
    <source>
    </source>
</evidence>
<evidence type="ECO:0000305" key="4"/>
<evidence type="ECO:0000305" key="5">
    <source>
    </source>
</evidence>
<reference key="1">
    <citation type="journal article" date="2009" name="BMC Genomics">
        <title>Comprehensive EST analysis of the symbiotic sea anemone, Anemonia viridis.</title>
        <authorList>
            <person name="Sabourault C."/>
            <person name="Ganot P."/>
            <person name="Deleury E."/>
            <person name="Allemand D."/>
            <person name="Furla P."/>
        </authorList>
    </citation>
    <scope>NUCLEOTIDE SEQUENCE [MRNA]</scope>
</reference>
<reference key="2">
    <citation type="journal article" date="2011" name="BMC Genomics">
        <title>The mining of toxin-like polypeptides from EST database by single residue distribution analysis.</title>
        <authorList>
            <person name="Kozlov S."/>
            <person name="Grishin E."/>
        </authorList>
    </citation>
    <scope>NOMENCLATURE</scope>
</reference>
<reference key="3">
    <citation type="journal article" date="2012" name="Toxicon">
        <title>Development of a rational nomenclature for naming peptide and protein toxins from sea anemones.</title>
        <authorList>
            <person name="Oliveira J.S."/>
            <person name="Fuentes-Silva D."/>
            <person name="King G.F."/>
        </authorList>
    </citation>
    <scope>NOMENCLATURE</scope>
</reference>
<comment type="subcellular location">
    <subcellularLocation>
        <location evidence="4">Secreted</location>
    </subcellularLocation>
    <subcellularLocation>
        <location evidence="4">Nematocyst</location>
    </subcellularLocation>
</comment>
<comment type="similarity">
    <text evidence="4">Belongs to the sea anemone 8 toxin family.</text>
</comment>
<comment type="caution">
    <text evidence="4">Opinions are divided on whether Anemonia viridis (Forsskal, 1775) and Anemonia sulcata (Pennant, 1777) are separate species.</text>
</comment>
<feature type="signal peptide" evidence="1">
    <location>
        <begin position="1"/>
        <end position="19"/>
    </location>
</feature>
<feature type="propeptide" id="PRO_0000433709" evidence="5">
    <location>
        <begin position="20"/>
        <end position="38"/>
    </location>
</feature>
<feature type="chain" id="PRO_0000433710" description="U-actitoxin-Avd8d">
    <location>
        <begin position="41"/>
        <end position="83"/>
    </location>
</feature>
<sequence length="83" mass="9134">MASTRLFVLLVIGTVLLCQVSGFLDELLAEHELPQDMTKRGCRNAYSSAICGKVITADDCMRKSSSRMGSFARKKCQRLCGIC</sequence>
<organism>
    <name type="scientific">Anemonia viridis</name>
    <name type="common">Snakelocks anemone</name>
    <dbReference type="NCBI Taxonomy" id="51769"/>
    <lineage>
        <taxon>Eukaryota</taxon>
        <taxon>Metazoa</taxon>
        <taxon>Cnidaria</taxon>
        <taxon>Anthozoa</taxon>
        <taxon>Hexacorallia</taxon>
        <taxon>Actiniaria</taxon>
        <taxon>Actiniidae</taxon>
        <taxon>Anemonia</taxon>
    </lineage>
</organism>
<name>TX8D_ANEVI</name>
<protein>
    <recommendedName>
        <fullName evidence="3">U-actitoxin-Avd8d</fullName>
        <shortName evidence="3">U-AITX-Avd8d</shortName>
    </recommendedName>
    <alternativeName>
        <fullName evidence="2">Avtx-4</fullName>
    </alternativeName>
</protein>
<dbReference type="EMBL" id="FK736739">
    <property type="status" value="NOT_ANNOTATED_CDS"/>
    <property type="molecule type" value="mRNA"/>
</dbReference>
<dbReference type="EMBL" id="FK738697">
    <property type="status" value="NOT_ANNOTATED_CDS"/>
    <property type="molecule type" value="mRNA"/>
</dbReference>
<dbReference type="EMBL" id="FK735015">
    <property type="status" value="NOT_ANNOTATED_CDS"/>
    <property type="molecule type" value="mRNA"/>
</dbReference>
<dbReference type="EMBL" id="FK756827">
    <property type="status" value="NOT_ANNOTATED_CDS"/>
    <property type="molecule type" value="mRNA"/>
</dbReference>
<dbReference type="EMBL" id="FK753497">
    <property type="status" value="NOT_ANNOTATED_CDS"/>
    <property type="molecule type" value="mRNA"/>
</dbReference>
<dbReference type="EMBL" id="FK735694">
    <property type="status" value="NOT_ANNOTATED_CDS"/>
    <property type="molecule type" value="mRNA"/>
</dbReference>
<dbReference type="EMBL" id="FK729391">
    <property type="status" value="NOT_ANNOTATED_CDS"/>
    <property type="molecule type" value="mRNA"/>
</dbReference>
<dbReference type="EMBL" id="FK750882">
    <property type="status" value="NOT_ANNOTATED_CDS"/>
    <property type="molecule type" value="mRNA"/>
</dbReference>
<dbReference type="SMR" id="P0DMZ6"/>
<dbReference type="GO" id="GO:0005576">
    <property type="term" value="C:extracellular region"/>
    <property type="evidence" value="ECO:0007669"/>
    <property type="project" value="UniProtKB-SubCell"/>
</dbReference>
<dbReference type="GO" id="GO:0042151">
    <property type="term" value="C:nematocyst"/>
    <property type="evidence" value="ECO:0007669"/>
    <property type="project" value="UniProtKB-SubCell"/>
</dbReference>
<dbReference type="GO" id="GO:0090729">
    <property type="term" value="F:toxin activity"/>
    <property type="evidence" value="ECO:0007669"/>
    <property type="project" value="UniProtKB-KW"/>
</dbReference>
<proteinExistence type="inferred from homology"/>
<accession>P0DMZ6</accession>
<keyword id="KW-0165">Cleavage on pair of basic residues</keyword>
<keyword id="KW-0166">Nematocyst</keyword>
<keyword id="KW-0964">Secreted</keyword>
<keyword id="KW-0732">Signal</keyword>
<keyword id="KW-0800">Toxin</keyword>